<keyword id="KW-0002">3D-structure</keyword>
<keyword id="KW-0145">Chemotaxis</keyword>
<keyword id="KW-0202">Cytokine</keyword>
<keyword id="KW-0903">Direct protein sequencing</keyword>
<keyword id="KW-1015">Disulfide bond</keyword>
<keyword id="KW-0325">Glycoprotein</keyword>
<keyword id="KW-0395">Inflammatory response</keyword>
<keyword id="KW-1267">Proteomics identification</keyword>
<keyword id="KW-1185">Reference proteome</keyword>
<keyword id="KW-0964">Secreted</keyword>
<keyword id="KW-0732">Signal</keyword>
<accession>O00175</accession>
<accession>B2R5K2</accession>
<name>CCL24_HUMAN</name>
<organism>
    <name type="scientific">Homo sapiens</name>
    <name type="common">Human</name>
    <dbReference type="NCBI Taxonomy" id="9606"/>
    <lineage>
        <taxon>Eukaryota</taxon>
        <taxon>Metazoa</taxon>
        <taxon>Chordata</taxon>
        <taxon>Craniata</taxon>
        <taxon>Vertebrata</taxon>
        <taxon>Euteleostomi</taxon>
        <taxon>Mammalia</taxon>
        <taxon>Eutheria</taxon>
        <taxon>Euarchontoglires</taxon>
        <taxon>Primates</taxon>
        <taxon>Haplorrhini</taxon>
        <taxon>Catarrhini</taxon>
        <taxon>Hominidae</taxon>
        <taxon>Homo</taxon>
    </lineage>
</organism>
<feature type="signal peptide" evidence="4 5 6">
    <location>
        <begin position="1"/>
        <end position="26"/>
    </location>
</feature>
<feature type="chain" id="PRO_0000005232" description="C-C motif chemokine 24">
    <location>
        <begin position="27"/>
        <end position="119"/>
    </location>
</feature>
<feature type="glycosylation site" description="N-linked (GlcNAc...) asparagine" evidence="1">
    <location>
        <position position="115"/>
    </location>
</feature>
<feature type="disulfide bond" evidence="2">
    <location>
        <begin position="33"/>
        <end position="58"/>
    </location>
</feature>
<feature type="disulfide bond" evidence="2">
    <location>
        <begin position="34"/>
        <end position="74"/>
    </location>
</feature>
<feature type="sequence variant" id="VAR_018404" description="In dbSNP:rs2302006." evidence="3">
    <original>I</original>
    <variation>L</variation>
    <location>
        <position position="29"/>
    </location>
</feature>
<feature type="sequence variant" id="VAR_048710" description="In dbSNP:rs11465293.">
    <original>S</original>
    <variation>F</variation>
    <location>
        <position position="31"/>
    </location>
</feature>
<feature type="sequence variant" id="VAR_048711" description="In dbSNP:rs11465312.">
    <original>A</original>
    <variation>T</variation>
    <location>
        <position position="102"/>
    </location>
</feature>
<feature type="sequence variant" id="VAR_048712" description="In dbSNP:rs11465313.">
    <original>Q</original>
    <variation>E</variation>
    <location>
        <position position="110"/>
    </location>
</feature>
<feature type="sequence conflict" description="In Ref. 1; AAB51135." evidence="9" ref="1">
    <original>A</original>
    <variation>G</variation>
    <location>
        <position position="61"/>
    </location>
</feature>
<feature type="sequence conflict" description="In Ref. 1; AA sequence." evidence="9" ref="1">
    <original>F</original>
    <variation>S</variation>
    <location>
        <position position="73"/>
    </location>
</feature>
<feature type="strand" evidence="12">
    <location>
        <begin position="35"/>
        <end position="37"/>
    </location>
</feature>
<feature type="turn" evidence="11">
    <location>
        <begin position="44"/>
        <end position="46"/>
    </location>
</feature>
<feature type="strand" evidence="11">
    <location>
        <begin position="47"/>
        <end position="52"/>
    </location>
</feature>
<feature type="strand" evidence="11">
    <location>
        <begin position="56"/>
        <end position="60"/>
    </location>
</feature>
<feature type="strand" evidence="11">
    <location>
        <begin position="63"/>
        <end position="67"/>
    </location>
</feature>
<feature type="strand" evidence="11">
    <location>
        <begin position="73"/>
        <end position="75"/>
    </location>
</feature>
<feature type="helix" evidence="11">
    <location>
        <begin position="80"/>
        <end position="92"/>
    </location>
</feature>
<sequence length="119" mass="13134">MAGLMTIVTSLLFLGVCAHHIIPTGSVVIPSPCCMFFVSKRIPENRVVSYQLSSRSTCLKAGVIFTTKKGQQFCGDPKQEWVQRYMKNLDAKQKKASPRARAVAVKGPVQRYPGNQTTC</sequence>
<dbReference type="EMBL" id="U85768">
    <property type="protein sequence ID" value="AAB51135.1"/>
    <property type="molecule type" value="mRNA"/>
</dbReference>
<dbReference type="EMBL" id="AK312216">
    <property type="protein sequence ID" value="BAG35149.1"/>
    <property type="molecule type" value="mRNA"/>
</dbReference>
<dbReference type="EMBL" id="AC005102">
    <property type="protein sequence ID" value="AAD15410.1"/>
    <property type="molecule type" value="Genomic_DNA"/>
</dbReference>
<dbReference type="EMBL" id="BC069072">
    <property type="protein sequence ID" value="AAH69072.1"/>
    <property type="molecule type" value="mRNA"/>
</dbReference>
<dbReference type="EMBL" id="BC069391">
    <property type="protein sequence ID" value="AAH69391.1"/>
    <property type="molecule type" value="mRNA"/>
</dbReference>
<dbReference type="EMBL" id="AJ223461">
    <property type="protein sequence ID" value="CAA11383.1"/>
    <property type="molecule type" value="mRNA"/>
</dbReference>
<dbReference type="CCDS" id="CCDS34670.1"/>
<dbReference type="RefSeq" id="NP_001358122.1">
    <property type="nucleotide sequence ID" value="NM_001371193.1"/>
</dbReference>
<dbReference type="RefSeq" id="NP_002982.2">
    <property type="nucleotide sequence ID" value="NM_002991.2"/>
</dbReference>
<dbReference type="RefSeq" id="XP_011514761.1">
    <property type="nucleotide sequence ID" value="XM_011516459.2"/>
</dbReference>
<dbReference type="RefSeq" id="XP_011514762.1">
    <property type="nucleotide sequence ID" value="XM_011516460.3"/>
</dbReference>
<dbReference type="RefSeq" id="XP_054214741.1">
    <property type="nucleotide sequence ID" value="XM_054358766.1"/>
</dbReference>
<dbReference type="PDB" id="1EIG">
    <property type="method" value="NMR"/>
    <property type="chains" value="A=27-99"/>
</dbReference>
<dbReference type="PDB" id="1EIH">
    <property type="method" value="NMR"/>
    <property type="chains" value="A=27-99"/>
</dbReference>
<dbReference type="PDBsum" id="1EIG"/>
<dbReference type="PDBsum" id="1EIH"/>
<dbReference type="BMRB" id="O00175"/>
<dbReference type="SMR" id="O00175"/>
<dbReference type="BioGRID" id="112272">
    <property type="interactions" value="8"/>
</dbReference>
<dbReference type="DIP" id="DIP-5876N"/>
<dbReference type="FunCoup" id="O00175">
    <property type="interactions" value="637"/>
</dbReference>
<dbReference type="IntAct" id="O00175">
    <property type="interactions" value="5"/>
</dbReference>
<dbReference type="STRING" id="9606.ENSP00000400533"/>
<dbReference type="GlyConnect" id="2007">
    <property type="glycosylation" value="1 N-Linked glycan (1 site)"/>
</dbReference>
<dbReference type="GlyCosmos" id="O00175">
    <property type="glycosylation" value="1 site, 1 glycan"/>
</dbReference>
<dbReference type="GlyGen" id="O00175">
    <property type="glycosylation" value="1 site, 1 N-linked glycan (1 site)"/>
</dbReference>
<dbReference type="iPTMnet" id="O00175"/>
<dbReference type="BioMuta" id="CCL24"/>
<dbReference type="MassIVE" id="O00175"/>
<dbReference type="PaxDb" id="9606-ENSP00000400533"/>
<dbReference type="PeptideAtlas" id="O00175"/>
<dbReference type="ProteomicsDB" id="47761"/>
<dbReference type="Antibodypedia" id="14858">
    <property type="antibodies" value="508 antibodies from 31 providers"/>
</dbReference>
<dbReference type="DNASU" id="6369"/>
<dbReference type="Ensembl" id="ENST00000222902.7">
    <property type="protein sequence ID" value="ENSP00000222902.2"/>
    <property type="gene ID" value="ENSG00000106178.7"/>
</dbReference>
<dbReference type="Ensembl" id="ENST00000416943.1">
    <property type="protein sequence ID" value="ENSP00000400533.1"/>
    <property type="gene ID" value="ENSG00000106178.7"/>
</dbReference>
<dbReference type="GeneID" id="6369"/>
<dbReference type="KEGG" id="hsa:6369"/>
<dbReference type="MANE-Select" id="ENST00000222902.7">
    <property type="protein sequence ID" value="ENSP00000222902.2"/>
    <property type="RefSeq nucleotide sequence ID" value="NM_002991.3"/>
    <property type="RefSeq protein sequence ID" value="NP_002982.2"/>
</dbReference>
<dbReference type="UCSC" id="uc011kga.3">
    <property type="organism name" value="human"/>
</dbReference>
<dbReference type="AGR" id="HGNC:10623"/>
<dbReference type="CTD" id="6369"/>
<dbReference type="DisGeNET" id="6369"/>
<dbReference type="GeneCards" id="CCL24"/>
<dbReference type="HGNC" id="HGNC:10623">
    <property type="gene designation" value="CCL24"/>
</dbReference>
<dbReference type="HPA" id="ENSG00000106178">
    <property type="expression patterns" value="Group enriched (intestine, lymphoid tissue)"/>
</dbReference>
<dbReference type="MIM" id="602495">
    <property type="type" value="gene"/>
</dbReference>
<dbReference type="neXtProt" id="NX_O00175"/>
<dbReference type="OpenTargets" id="ENSG00000106178"/>
<dbReference type="PharmGKB" id="PA35555"/>
<dbReference type="VEuPathDB" id="HostDB:ENSG00000106178"/>
<dbReference type="eggNOG" id="ENOG502S6ZP">
    <property type="taxonomic scope" value="Eukaryota"/>
</dbReference>
<dbReference type="GeneTree" id="ENSGT01100000263482"/>
<dbReference type="HOGENOM" id="CLU_141716_1_1_1"/>
<dbReference type="InParanoid" id="O00175"/>
<dbReference type="OMA" id="QKFCGNP"/>
<dbReference type="OrthoDB" id="9834099at2759"/>
<dbReference type="PAN-GO" id="O00175">
    <property type="GO annotations" value="15 GO annotations based on evolutionary models"/>
</dbReference>
<dbReference type="PhylomeDB" id="O00175"/>
<dbReference type="TreeFam" id="TF334888"/>
<dbReference type="PathwayCommons" id="O00175"/>
<dbReference type="SignaLink" id="O00175"/>
<dbReference type="BioGRID-ORCS" id="6369">
    <property type="hits" value="10 hits in 1136 CRISPR screens"/>
</dbReference>
<dbReference type="ChiTaRS" id="CCL24">
    <property type="organism name" value="human"/>
</dbReference>
<dbReference type="EvolutionaryTrace" id="O00175"/>
<dbReference type="GenomeRNAi" id="6369"/>
<dbReference type="Pharos" id="O00175">
    <property type="development level" value="Tbio"/>
</dbReference>
<dbReference type="PRO" id="PR:O00175"/>
<dbReference type="Proteomes" id="UP000005640">
    <property type="component" value="Chromosome 7"/>
</dbReference>
<dbReference type="RNAct" id="O00175">
    <property type="molecule type" value="protein"/>
</dbReference>
<dbReference type="Bgee" id="ENSG00000106178">
    <property type="expression patterns" value="Expressed in rectum and 105 other cell types or tissues"/>
</dbReference>
<dbReference type="GO" id="GO:0005615">
    <property type="term" value="C:extracellular space"/>
    <property type="evidence" value="ECO:0000318"/>
    <property type="project" value="GO_Central"/>
</dbReference>
<dbReference type="GO" id="GO:0048020">
    <property type="term" value="F:CCR chemokine receptor binding"/>
    <property type="evidence" value="ECO:0000318"/>
    <property type="project" value="GO_Central"/>
</dbReference>
<dbReference type="GO" id="GO:0031728">
    <property type="term" value="F:CCR3 chemokine receptor binding"/>
    <property type="evidence" value="ECO:0000314"/>
    <property type="project" value="CAFA"/>
</dbReference>
<dbReference type="GO" id="GO:0008009">
    <property type="term" value="F:chemokine activity"/>
    <property type="evidence" value="ECO:0000314"/>
    <property type="project" value="UniProtKB"/>
</dbReference>
<dbReference type="GO" id="GO:0048018">
    <property type="term" value="F:receptor ligand activity"/>
    <property type="evidence" value="ECO:0000314"/>
    <property type="project" value="CAFA"/>
</dbReference>
<dbReference type="GO" id="GO:0061844">
    <property type="term" value="P:antimicrobial humoral immune response mediated by antimicrobial peptide"/>
    <property type="evidence" value="ECO:0000318"/>
    <property type="project" value="GO_Central"/>
</dbReference>
<dbReference type="GO" id="GO:0007267">
    <property type="term" value="P:cell-cell signaling"/>
    <property type="evidence" value="ECO:0000304"/>
    <property type="project" value="ProtInc"/>
</dbReference>
<dbReference type="GO" id="GO:0070098">
    <property type="term" value="P:chemokine-mediated signaling pathway"/>
    <property type="evidence" value="ECO:0000314"/>
    <property type="project" value="BHF-UCL"/>
</dbReference>
<dbReference type="GO" id="GO:0006935">
    <property type="term" value="P:chemotaxis"/>
    <property type="evidence" value="ECO:0000304"/>
    <property type="project" value="ProtInc"/>
</dbReference>
<dbReference type="GO" id="GO:0007010">
    <property type="term" value="P:cytoskeleton organization"/>
    <property type="evidence" value="ECO:0000314"/>
    <property type="project" value="UniProtKB"/>
</dbReference>
<dbReference type="GO" id="GO:0048245">
    <property type="term" value="P:eosinophil chemotaxis"/>
    <property type="evidence" value="ECO:0000314"/>
    <property type="project" value="UniProtKB"/>
</dbReference>
<dbReference type="GO" id="GO:0006955">
    <property type="term" value="P:immune response"/>
    <property type="evidence" value="ECO:0000304"/>
    <property type="project" value="ProtInc"/>
</dbReference>
<dbReference type="GO" id="GO:0006954">
    <property type="term" value="P:inflammatory response"/>
    <property type="evidence" value="ECO:0000318"/>
    <property type="project" value="GO_Central"/>
</dbReference>
<dbReference type="GO" id="GO:0030838">
    <property type="term" value="P:positive regulation of actin filament polymerization"/>
    <property type="evidence" value="ECO:0000314"/>
    <property type="project" value="BHF-UCL"/>
</dbReference>
<dbReference type="GO" id="GO:0045766">
    <property type="term" value="P:positive regulation of angiogenesis"/>
    <property type="evidence" value="ECO:0007669"/>
    <property type="project" value="Ensembl"/>
</dbReference>
<dbReference type="GO" id="GO:0030335">
    <property type="term" value="P:positive regulation of cell migration"/>
    <property type="evidence" value="ECO:0000314"/>
    <property type="project" value="BHF-UCL"/>
</dbReference>
<dbReference type="GO" id="GO:0001938">
    <property type="term" value="P:positive regulation of endothelial cell proliferation"/>
    <property type="evidence" value="ECO:0000314"/>
    <property type="project" value="BHF-UCL"/>
</dbReference>
<dbReference type="GO" id="GO:2000418">
    <property type="term" value="P:positive regulation of eosinophil migration"/>
    <property type="evidence" value="ECO:0007669"/>
    <property type="project" value="Ensembl"/>
</dbReference>
<dbReference type="GO" id="GO:0050729">
    <property type="term" value="P:positive regulation of inflammatory response"/>
    <property type="evidence" value="ECO:0007669"/>
    <property type="project" value="Ensembl"/>
</dbReference>
<dbReference type="GO" id="GO:0008360">
    <property type="term" value="P:regulation of cell shape"/>
    <property type="evidence" value="ECO:0000314"/>
    <property type="project" value="UniProtKB"/>
</dbReference>
<dbReference type="GO" id="GO:0007165">
    <property type="term" value="P:signal transduction"/>
    <property type="evidence" value="ECO:0000304"/>
    <property type="project" value="ProtInc"/>
</dbReference>
<dbReference type="CDD" id="cd00272">
    <property type="entry name" value="Chemokine_CC"/>
    <property type="match status" value="1"/>
</dbReference>
<dbReference type="FunFam" id="2.40.50.40:FF:000002">
    <property type="entry name" value="C-C motif chemokine"/>
    <property type="match status" value="1"/>
</dbReference>
<dbReference type="Gene3D" id="2.40.50.40">
    <property type="match status" value="1"/>
</dbReference>
<dbReference type="InterPro" id="IPR039809">
    <property type="entry name" value="Chemokine_b/g/d"/>
</dbReference>
<dbReference type="InterPro" id="IPR001811">
    <property type="entry name" value="Chemokine_IL8-like_dom"/>
</dbReference>
<dbReference type="InterPro" id="IPR036048">
    <property type="entry name" value="Interleukin_8-like_sf"/>
</dbReference>
<dbReference type="PANTHER" id="PTHR12015:SF100">
    <property type="entry name" value="C-C MOTIF CHEMOKINE 24"/>
    <property type="match status" value="1"/>
</dbReference>
<dbReference type="PANTHER" id="PTHR12015">
    <property type="entry name" value="SMALL INDUCIBLE CYTOKINE A"/>
    <property type="match status" value="1"/>
</dbReference>
<dbReference type="Pfam" id="PF00048">
    <property type="entry name" value="IL8"/>
    <property type="match status" value="1"/>
</dbReference>
<dbReference type="SMART" id="SM00199">
    <property type="entry name" value="SCY"/>
    <property type="match status" value="1"/>
</dbReference>
<dbReference type="SUPFAM" id="SSF54117">
    <property type="entry name" value="Interleukin 8-like chemokines"/>
    <property type="match status" value="1"/>
</dbReference>
<comment type="function">
    <text evidence="5 6">Chemotactic for resting T-lymphocytes, and eosinophils (PubMed:9104803, PubMed:9365122). Has lower chemotactic activity for neutrophils but none for monocytes and activated lymphocytes (PubMed:9104803, PubMed:9365122). Is a strong suppressor of colony formation by a multipotential hematopoietic progenitor cell line (PubMed:9104803, PubMed:9365122). Binds to CCR3 (PubMed:9104803, PubMed:9365122).</text>
</comment>
<comment type="interaction">
    <interactant intactId="EBI-16803966">
        <id>O00175</id>
    </interactant>
    <interactant intactId="EBI-2848366">
        <id>P13501</id>
        <label>CCL5</label>
    </interactant>
    <organismsDiffer>false</organismsDiffer>
    <experiments>3</experiments>
</comment>
<comment type="interaction">
    <interactant intactId="EBI-16803966">
        <id>O00175</id>
    </interactant>
    <interactant intactId="EBI-2871971">
        <id>O14625</id>
        <label>CXCL11</label>
    </interactant>
    <organismsDiffer>false</organismsDiffer>
    <experiments>2</experiments>
</comment>
<comment type="subcellular location">
    <subcellularLocation>
        <location evidence="5 6">Secreted</location>
    </subcellularLocation>
</comment>
<comment type="tissue specificity">
    <text evidence="5">Activated monocytes and activated T lymphocytes.</text>
</comment>
<comment type="PTM">
    <text evidence="5">N-glycosylated.</text>
</comment>
<comment type="similarity">
    <text evidence="9">Belongs to the intercrine beta (chemokine CC) family.</text>
</comment>
<comment type="online information" name="Wikipedia">
    <link uri="https://en.wikipedia.org/wiki/CCL24"/>
    <text>CCL24 entry</text>
</comment>
<proteinExistence type="evidence at protein level"/>
<reference key="1">
    <citation type="journal article" date="1997" name="J. Exp. Med.">
        <title>Molecular and functional characterization of two novel human C-C chemokines as inhibitors of two distinct classes of myeloid progenitors.</title>
        <authorList>
            <person name="Patel V.P."/>
            <person name="Kreider B.L."/>
            <person name="Li Y."/>
            <person name="Li H."/>
            <person name="Leung K."/>
            <person name="Salcedo T."/>
            <person name="Nardelli B."/>
            <person name="Pippalla V."/>
            <person name="Gentz S."/>
            <person name="Thotakura R."/>
            <person name="Parmelee D."/>
            <person name="Gentz R."/>
            <person name="Garotta G."/>
        </authorList>
    </citation>
    <scope>NUCLEOTIDE SEQUENCE [MRNA]</scope>
    <scope>PROTEIN SEQUENCE OF 27-41 AND 73</scope>
    <scope>FUNCTION</scope>
    <scope>SUBCELLULAR LOCATION</scope>
    <scope>GLYCOSYLATION</scope>
    <scope>TISSUE SPECIFICITY</scope>
    <source>
        <tissue>Monocyte</tissue>
    </source>
</reference>
<reference key="2">
    <citation type="journal article" date="1997" name="J. Leukoc. Biol.">
        <title>Cloning and functional characterization of a novel human CC chemokine that binds to the CCR3 receptor and activates human eosinophils.</title>
        <authorList>
            <person name="White J.R."/>
            <person name="Imburgia C."/>
            <person name="Dul E."/>
            <person name="Appelbaum E."/>
            <person name="O'Donnell K."/>
            <person name="O'Shannessy D.J."/>
            <person name="Brawner M."/>
            <person name="Fornwald J."/>
            <person name="Adamou J."/>
            <person name="Elshourbagy N.A."/>
            <person name="Kaiser K."/>
            <person name="Foley J.J."/>
            <person name="Schmidt D.B."/>
            <person name="Johanson K."/>
            <person name="Macphee C."/>
            <person name="Moores K."/>
            <person name="McNulty D."/>
            <person name="Scott G.F."/>
            <person name="Schleimer R.P."/>
            <person name="Sarau H.M."/>
        </authorList>
    </citation>
    <scope>NUCLEOTIDE SEQUENCE [MRNA]</scope>
    <scope>PROTEIN SEQUENCE OF N-TERMINUS</scope>
    <scope>FUNCTION</scope>
    <scope>SUBCELLULAR LOCATION</scope>
    <source>
        <tissue>Monocyte</tissue>
    </source>
</reference>
<reference key="3">
    <citation type="journal article" date="2004" name="Nat. Genet.">
        <title>Complete sequencing and characterization of 21,243 full-length human cDNAs.</title>
        <authorList>
            <person name="Ota T."/>
            <person name="Suzuki Y."/>
            <person name="Nishikawa T."/>
            <person name="Otsuki T."/>
            <person name="Sugiyama T."/>
            <person name="Irie R."/>
            <person name="Wakamatsu A."/>
            <person name="Hayashi K."/>
            <person name="Sato H."/>
            <person name="Nagai K."/>
            <person name="Kimura K."/>
            <person name="Makita H."/>
            <person name="Sekine M."/>
            <person name="Obayashi M."/>
            <person name="Nishi T."/>
            <person name="Shibahara T."/>
            <person name="Tanaka T."/>
            <person name="Ishii S."/>
            <person name="Yamamoto J."/>
            <person name="Saito K."/>
            <person name="Kawai Y."/>
            <person name="Isono Y."/>
            <person name="Nakamura Y."/>
            <person name="Nagahari K."/>
            <person name="Murakami K."/>
            <person name="Yasuda T."/>
            <person name="Iwayanagi T."/>
            <person name="Wagatsuma M."/>
            <person name="Shiratori A."/>
            <person name="Sudo H."/>
            <person name="Hosoiri T."/>
            <person name="Kaku Y."/>
            <person name="Kodaira H."/>
            <person name="Kondo H."/>
            <person name="Sugawara M."/>
            <person name="Takahashi M."/>
            <person name="Kanda K."/>
            <person name="Yokoi T."/>
            <person name="Furuya T."/>
            <person name="Kikkawa E."/>
            <person name="Omura Y."/>
            <person name="Abe K."/>
            <person name="Kamihara K."/>
            <person name="Katsuta N."/>
            <person name="Sato K."/>
            <person name="Tanikawa M."/>
            <person name="Yamazaki M."/>
            <person name="Ninomiya K."/>
            <person name="Ishibashi T."/>
            <person name="Yamashita H."/>
            <person name="Murakawa K."/>
            <person name="Fujimori K."/>
            <person name="Tanai H."/>
            <person name="Kimata M."/>
            <person name="Watanabe M."/>
            <person name="Hiraoka S."/>
            <person name="Chiba Y."/>
            <person name="Ishida S."/>
            <person name="Ono Y."/>
            <person name="Takiguchi S."/>
            <person name="Watanabe S."/>
            <person name="Yosida M."/>
            <person name="Hotuta T."/>
            <person name="Kusano J."/>
            <person name="Kanehori K."/>
            <person name="Takahashi-Fujii A."/>
            <person name="Hara H."/>
            <person name="Tanase T.-O."/>
            <person name="Nomura Y."/>
            <person name="Togiya S."/>
            <person name="Komai F."/>
            <person name="Hara R."/>
            <person name="Takeuchi K."/>
            <person name="Arita M."/>
            <person name="Imose N."/>
            <person name="Musashino K."/>
            <person name="Yuuki H."/>
            <person name="Oshima A."/>
            <person name="Sasaki N."/>
            <person name="Aotsuka S."/>
            <person name="Yoshikawa Y."/>
            <person name="Matsunawa H."/>
            <person name="Ichihara T."/>
            <person name="Shiohata N."/>
            <person name="Sano S."/>
            <person name="Moriya S."/>
            <person name="Momiyama H."/>
            <person name="Satoh N."/>
            <person name="Takami S."/>
            <person name="Terashima Y."/>
            <person name="Suzuki O."/>
            <person name="Nakagawa S."/>
            <person name="Senoh A."/>
            <person name="Mizoguchi H."/>
            <person name="Goto Y."/>
            <person name="Shimizu F."/>
            <person name="Wakebe H."/>
            <person name="Hishigaki H."/>
            <person name="Watanabe T."/>
            <person name="Sugiyama A."/>
            <person name="Takemoto M."/>
            <person name="Kawakami B."/>
            <person name="Yamazaki M."/>
            <person name="Watanabe K."/>
            <person name="Kumagai A."/>
            <person name="Itakura S."/>
            <person name="Fukuzumi Y."/>
            <person name="Fujimori Y."/>
            <person name="Komiyama M."/>
            <person name="Tashiro H."/>
            <person name="Tanigami A."/>
            <person name="Fujiwara T."/>
            <person name="Ono T."/>
            <person name="Yamada K."/>
            <person name="Fujii Y."/>
            <person name="Ozaki K."/>
            <person name="Hirao M."/>
            <person name="Ohmori Y."/>
            <person name="Kawabata A."/>
            <person name="Hikiji T."/>
            <person name="Kobatake N."/>
            <person name="Inagaki H."/>
            <person name="Ikema Y."/>
            <person name="Okamoto S."/>
            <person name="Okitani R."/>
            <person name="Kawakami T."/>
            <person name="Noguchi S."/>
            <person name="Itoh T."/>
            <person name="Shigeta K."/>
            <person name="Senba T."/>
            <person name="Matsumura K."/>
            <person name="Nakajima Y."/>
            <person name="Mizuno T."/>
            <person name="Morinaga M."/>
            <person name="Sasaki M."/>
            <person name="Togashi T."/>
            <person name="Oyama M."/>
            <person name="Hata H."/>
            <person name="Watanabe M."/>
            <person name="Komatsu T."/>
            <person name="Mizushima-Sugano J."/>
            <person name="Satoh T."/>
            <person name="Shirai Y."/>
            <person name="Takahashi Y."/>
            <person name="Nakagawa K."/>
            <person name="Okumura K."/>
            <person name="Nagase T."/>
            <person name="Nomura N."/>
            <person name="Kikuchi H."/>
            <person name="Masuho Y."/>
            <person name="Yamashita R."/>
            <person name="Nakai K."/>
            <person name="Yada T."/>
            <person name="Nakamura Y."/>
            <person name="Ohara O."/>
            <person name="Isogai T."/>
            <person name="Sugano S."/>
        </authorList>
    </citation>
    <scope>NUCLEOTIDE SEQUENCE [LARGE SCALE MRNA]</scope>
    <scope>VARIANT LEU-29</scope>
    <source>
        <tissue>Colon</tissue>
    </source>
</reference>
<reference key="4">
    <citation type="journal article" date="2003" name="Nature">
        <title>The DNA sequence of human chromosome 7.</title>
        <authorList>
            <person name="Hillier L.W."/>
            <person name="Fulton R.S."/>
            <person name="Fulton L.A."/>
            <person name="Graves T.A."/>
            <person name="Pepin K.H."/>
            <person name="Wagner-McPherson C."/>
            <person name="Layman D."/>
            <person name="Maas J."/>
            <person name="Jaeger S."/>
            <person name="Walker R."/>
            <person name="Wylie K."/>
            <person name="Sekhon M."/>
            <person name="Becker M.C."/>
            <person name="O'Laughlin M.D."/>
            <person name="Schaller M.E."/>
            <person name="Fewell G.A."/>
            <person name="Delehaunty K.D."/>
            <person name="Miner T.L."/>
            <person name="Nash W.E."/>
            <person name="Cordes M."/>
            <person name="Du H."/>
            <person name="Sun H."/>
            <person name="Edwards J."/>
            <person name="Bradshaw-Cordum H."/>
            <person name="Ali J."/>
            <person name="Andrews S."/>
            <person name="Isak A."/>
            <person name="Vanbrunt A."/>
            <person name="Nguyen C."/>
            <person name="Du F."/>
            <person name="Lamar B."/>
            <person name="Courtney L."/>
            <person name="Kalicki J."/>
            <person name="Ozersky P."/>
            <person name="Bielicki L."/>
            <person name="Scott K."/>
            <person name="Holmes A."/>
            <person name="Harkins R."/>
            <person name="Harris A."/>
            <person name="Strong C.M."/>
            <person name="Hou S."/>
            <person name="Tomlinson C."/>
            <person name="Dauphin-Kohlberg S."/>
            <person name="Kozlowicz-Reilly A."/>
            <person name="Leonard S."/>
            <person name="Rohlfing T."/>
            <person name="Rock S.M."/>
            <person name="Tin-Wollam A.-M."/>
            <person name="Abbott A."/>
            <person name="Minx P."/>
            <person name="Maupin R."/>
            <person name="Strowmatt C."/>
            <person name="Latreille P."/>
            <person name="Miller N."/>
            <person name="Johnson D."/>
            <person name="Murray J."/>
            <person name="Woessner J.P."/>
            <person name="Wendl M.C."/>
            <person name="Yang S.-P."/>
            <person name="Schultz B.R."/>
            <person name="Wallis J.W."/>
            <person name="Spieth J."/>
            <person name="Bieri T.A."/>
            <person name="Nelson J.O."/>
            <person name="Berkowicz N."/>
            <person name="Wohldmann P.E."/>
            <person name="Cook L.L."/>
            <person name="Hickenbotham M.T."/>
            <person name="Eldred J."/>
            <person name="Williams D."/>
            <person name="Bedell J.A."/>
            <person name="Mardis E.R."/>
            <person name="Clifton S.W."/>
            <person name="Chissoe S.L."/>
            <person name="Marra M.A."/>
            <person name="Raymond C."/>
            <person name="Haugen E."/>
            <person name="Gillett W."/>
            <person name="Zhou Y."/>
            <person name="James R."/>
            <person name="Phelps K."/>
            <person name="Iadanoto S."/>
            <person name="Bubb K."/>
            <person name="Simms E."/>
            <person name="Levy R."/>
            <person name="Clendenning J."/>
            <person name="Kaul R."/>
            <person name="Kent W.J."/>
            <person name="Furey T.S."/>
            <person name="Baertsch R.A."/>
            <person name="Brent M.R."/>
            <person name="Keibler E."/>
            <person name="Flicek P."/>
            <person name="Bork P."/>
            <person name="Suyama M."/>
            <person name="Bailey J.A."/>
            <person name="Portnoy M.E."/>
            <person name="Torrents D."/>
            <person name="Chinwalla A.T."/>
            <person name="Gish W.R."/>
            <person name="Eddy S.R."/>
            <person name="McPherson J.D."/>
            <person name="Olson M.V."/>
            <person name="Eichler E.E."/>
            <person name="Green E.D."/>
            <person name="Waterston R.H."/>
            <person name="Wilson R.K."/>
        </authorList>
    </citation>
    <scope>NUCLEOTIDE SEQUENCE [LARGE SCALE GENOMIC DNA]</scope>
</reference>
<reference key="5">
    <citation type="journal article" date="2004" name="Genome Res.">
        <title>The status, quality, and expansion of the NIH full-length cDNA project: the Mammalian Gene Collection (MGC).</title>
        <authorList>
            <consortium name="The MGC Project Team"/>
        </authorList>
    </citation>
    <scope>NUCLEOTIDE SEQUENCE [LARGE SCALE MRNA]</scope>
</reference>
<reference key="6">
    <citation type="submission" date="1998-01" db="EMBL/GenBank/DDBJ databases">
        <title>cDNA, genomic organisation and chromosomal location of the MPIF-2 (eotaxin-2) gene.</title>
        <authorList>
            <person name="Hein H."/>
            <person name="Theran L."/>
        </authorList>
    </citation>
    <scope>NUCLEOTIDE SEQUENCE [MRNA] OF 3-117</scope>
</reference>
<reference key="7">
    <citation type="journal article" date="2004" name="Protein Sci.">
        <title>Signal peptide prediction based on analysis of experimentally verified cleavage sites.</title>
        <authorList>
            <person name="Zhang Z."/>
            <person name="Henzel W.J."/>
        </authorList>
    </citation>
    <scope>PROTEIN SEQUENCE OF 27-41</scope>
</reference>
<reference key="8">
    <citation type="journal article" date="2000" name="Biochemistry">
        <title>NMR solution structure and receptor peptide binding of the CC chemokine eotaxin-2.</title>
        <authorList>
            <person name="Mayer K.L."/>
            <person name="Stone M.J."/>
        </authorList>
    </citation>
    <scope>STRUCTURE BY NMR</scope>
    <scope>DISULFIDE BONDS</scope>
</reference>
<protein>
    <recommendedName>
        <fullName>C-C motif chemokine 24</fullName>
    </recommendedName>
    <alternativeName>
        <fullName>CK-beta-6</fullName>
    </alternativeName>
    <alternativeName>
        <fullName evidence="8">Eosinophil chemotactic protein 2</fullName>
        <shortName evidence="8">Eotaxin-2</shortName>
    </alternativeName>
    <alternativeName>
        <fullName evidence="7">Myeloid progenitor inhibitory factor 2</fullName>
        <shortName evidence="7">MPIF-2</shortName>
    </alternativeName>
    <alternativeName>
        <fullName>Small-inducible cytokine A24</fullName>
    </alternativeName>
</protein>
<gene>
    <name evidence="10" type="primary">CCL24</name>
    <name evidence="7" type="synonym">MPIF2</name>
    <name type="synonym">SCYA24</name>
</gene>
<evidence type="ECO:0000255" key="1"/>
<evidence type="ECO:0000269" key="2">
    <source>
    </source>
</evidence>
<evidence type="ECO:0000269" key="3">
    <source>
    </source>
</evidence>
<evidence type="ECO:0000269" key="4">
    <source>
    </source>
</evidence>
<evidence type="ECO:0000269" key="5">
    <source>
    </source>
</evidence>
<evidence type="ECO:0000269" key="6">
    <source>
    </source>
</evidence>
<evidence type="ECO:0000303" key="7">
    <source>
    </source>
</evidence>
<evidence type="ECO:0000303" key="8">
    <source ref="6"/>
</evidence>
<evidence type="ECO:0000305" key="9"/>
<evidence type="ECO:0000312" key="10">
    <source>
        <dbReference type="HGNC" id="HGNC:10623"/>
    </source>
</evidence>
<evidence type="ECO:0007829" key="11">
    <source>
        <dbReference type="PDB" id="1EIG"/>
    </source>
</evidence>
<evidence type="ECO:0007829" key="12">
    <source>
        <dbReference type="PDB" id="1EIH"/>
    </source>
</evidence>